<gene>
    <name evidence="1" type="primary">tpx</name>
    <name type="ordered locus">SAS1640</name>
</gene>
<comment type="function">
    <text evidence="1">Thiol-specific peroxidase that catalyzes the reduction of hydrogen peroxide and organic hydroperoxides to water and alcohols, respectively. Plays a role in cell protection against oxidative stress by detoxifying peroxides.</text>
</comment>
<comment type="catalytic activity">
    <reaction evidence="1">
        <text>a hydroperoxide + [thioredoxin]-dithiol = an alcohol + [thioredoxin]-disulfide + H2O</text>
        <dbReference type="Rhea" id="RHEA:62620"/>
        <dbReference type="Rhea" id="RHEA-COMP:10698"/>
        <dbReference type="Rhea" id="RHEA-COMP:10700"/>
        <dbReference type="ChEBI" id="CHEBI:15377"/>
        <dbReference type="ChEBI" id="CHEBI:29950"/>
        <dbReference type="ChEBI" id="CHEBI:30879"/>
        <dbReference type="ChEBI" id="CHEBI:35924"/>
        <dbReference type="ChEBI" id="CHEBI:50058"/>
        <dbReference type="EC" id="1.11.1.24"/>
    </reaction>
</comment>
<comment type="subunit">
    <text evidence="1">Homodimer.</text>
</comment>
<comment type="miscellaneous">
    <text evidence="1">The active site is a conserved redox-active cysteine residue, the peroxidatic cysteine (C(P)), which makes the nucleophilic attack on the peroxide substrate. The peroxide oxidizes the C(P)-SH to cysteine sulfenic acid (C(P)-SOH), which then reacts with another cysteine residue, the resolving cysteine (C(R)), to form a disulfide bridge. The disulfide is subsequently reduced by an appropriate electron donor to complete the catalytic cycle. In this atypical 2-Cys peroxiredoxin, C(R) is present in the same subunit to form an intramolecular disulfide. The disulfide is subsequently reduced by thioredoxin.</text>
</comment>
<comment type="similarity">
    <text evidence="1">Belongs to the peroxiredoxin family. Tpx subfamily.</text>
</comment>
<protein>
    <recommendedName>
        <fullName evidence="1">Thiol peroxidase</fullName>
        <shortName evidence="1">Tpx</shortName>
        <ecNumber evidence="1">1.11.1.24</ecNumber>
    </recommendedName>
    <alternativeName>
        <fullName evidence="1">Peroxiredoxin tpx</fullName>
        <shortName evidence="1">Prx</shortName>
    </alternativeName>
    <alternativeName>
        <fullName evidence="1">Thioredoxin peroxidase</fullName>
    </alternativeName>
    <alternativeName>
        <fullName evidence="1">Thioredoxin-dependent peroxiredoxin</fullName>
    </alternativeName>
</protein>
<reference key="1">
    <citation type="journal article" date="2004" name="Proc. Natl. Acad. Sci. U.S.A.">
        <title>Complete genomes of two clinical Staphylococcus aureus strains: evidence for the rapid evolution of virulence and drug resistance.</title>
        <authorList>
            <person name="Holden M.T.G."/>
            <person name="Feil E.J."/>
            <person name="Lindsay J.A."/>
            <person name="Peacock S.J."/>
            <person name="Day N.P.J."/>
            <person name="Enright M.C."/>
            <person name="Foster T.J."/>
            <person name="Moore C.E."/>
            <person name="Hurst L."/>
            <person name="Atkin R."/>
            <person name="Barron A."/>
            <person name="Bason N."/>
            <person name="Bentley S.D."/>
            <person name="Chillingworth C."/>
            <person name="Chillingworth T."/>
            <person name="Churcher C."/>
            <person name="Clark L."/>
            <person name="Corton C."/>
            <person name="Cronin A."/>
            <person name="Doggett J."/>
            <person name="Dowd L."/>
            <person name="Feltwell T."/>
            <person name="Hance Z."/>
            <person name="Harris B."/>
            <person name="Hauser H."/>
            <person name="Holroyd S."/>
            <person name="Jagels K."/>
            <person name="James K.D."/>
            <person name="Lennard N."/>
            <person name="Line A."/>
            <person name="Mayes R."/>
            <person name="Moule S."/>
            <person name="Mungall K."/>
            <person name="Ormond D."/>
            <person name="Quail M.A."/>
            <person name="Rabbinowitsch E."/>
            <person name="Rutherford K.M."/>
            <person name="Sanders M."/>
            <person name="Sharp S."/>
            <person name="Simmonds M."/>
            <person name="Stevens K."/>
            <person name="Whitehead S."/>
            <person name="Barrell B.G."/>
            <person name="Spratt B.G."/>
            <person name="Parkhill J."/>
        </authorList>
    </citation>
    <scope>NUCLEOTIDE SEQUENCE [LARGE SCALE GENOMIC DNA]</scope>
    <source>
        <strain>MSSA476</strain>
    </source>
</reference>
<evidence type="ECO:0000255" key="1">
    <source>
        <dbReference type="HAMAP-Rule" id="MF_00269"/>
    </source>
</evidence>
<organism>
    <name type="scientific">Staphylococcus aureus (strain MSSA476)</name>
    <dbReference type="NCBI Taxonomy" id="282459"/>
    <lineage>
        <taxon>Bacteria</taxon>
        <taxon>Bacillati</taxon>
        <taxon>Bacillota</taxon>
        <taxon>Bacilli</taxon>
        <taxon>Bacillales</taxon>
        <taxon>Staphylococcaceae</taxon>
        <taxon>Staphylococcus</taxon>
    </lineage>
</organism>
<name>TPX_STAAS</name>
<feature type="chain" id="PRO_0000187902" description="Thiol peroxidase">
    <location>
        <begin position="1"/>
        <end position="164"/>
    </location>
</feature>
<feature type="domain" description="Thioredoxin" evidence="1">
    <location>
        <begin position="18"/>
        <end position="163"/>
    </location>
</feature>
<feature type="active site" description="Cysteine sulfenic acid (-SOH) intermediate" evidence="1">
    <location>
        <position position="60"/>
    </location>
</feature>
<feature type="disulfide bond" description="Redox-active" evidence="1">
    <location>
        <begin position="60"/>
        <end position="93"/>
    </location>
</feature>
<dbReference type="EC" id="1.11.1.24" evidence="1"/>
<dbReference type="EMBL" id="BX571857">
    <property type="protein sequence ID" value="CAG43442.1"/>
    <property type="molecule type" value="Genomic_DNA"/>
</dbReference>
<dbReference type="RefSeq" id="WP_000136253.1">
    <property type="nucleotide sequence ID" value="NC_002953.3"/>
</dbReference>
<dbReference type="SMR" id="Q6G8L4"/>
<dbReference type="PeroxiBase" id="6010">
    <property type="entry name" value="SaurTPx_MW2"/>
</dbReference>
<dbReference type="KEGG" id="sas:SAS1640"/>
<dbReference type="HOGENOM" id="CLU_042529_12_0_9"/>
<dbReference type="GO" id="GO:0008379">
    <property type="term" value="F:thioredoxin peroxidase activity"/>
    <property type="evidence" value="ECO:0007669"/>
    <property type="project" value="UniProtKB-UniRule"/>
</dbReference>
<dbReference type="CDD" id="cd03014">
    <property type="entry name" value="PRX_Atyp2cys"/>
    <property type="match status" value="1"/>
</dbReference>
<dbReference type="Gene3D" id="3.40.30.10">
    <property type="entry name" value="Glutaredoxin"/>
    <property type="match status" value="1"/>
</dbReference>
<dbReference type="HAMAP" id="MF_00269">
    <property type="entry name" value="Tpx"/>
    <property type="match status" value="1"/>
</dbReference>
<dbReference type="InterPro" id="IPR013740">
    <property type="entry name" value="Redoxin"/>
</dbReference>
<dbReference type="InterPro" id="IPR036249">
    <property type="entry name" value="Thioredoxin-like_sf"/>
</dbReference>
<dbReference type="InterPro" id="IPR013766">
    <property type="entry name" value="Thioredoxin_domain"/>
</dbReference>
<dbReference type="InterPro" id="IPR002065">
    <property type="entry name" value="TPX"/>
</dbReference>
<dbReference type="InterPro" id="IPR018219">
    <property type="entry name" value="Tpx_CS"/>
</dbReference>
<dbReference type="InterPro" id="IPR050455">
    <property type="entry name" value="Tpx_Peroxidase_subfamily"/>
</dbReference>
<dbReference type="NCBIfam" id="NF001808">
    <property type="entry name" value="PRK00522.1"/>
    <property type="match status" value="1"/>
</dbReference>
<dbReference type="PANTHER" id="PTHR43110">
    <property type="entry name" value="THIOL PEROXIDASE"/>
    <property type="match status" value="1"/>
</dbReference>
<dbReference type="PANTHER" id="PTHR43110:SF1">
    <property type="entry name" value="THIOL PEROXIDASE"/>
    <property type="match status" value="1"/>
</dbReference>
<dbReference type="Pfam" id="PF08534">
    <property type="entry name" value="Redoxin"/>
    <property type="match status" value="1"/>
</dbReference>
<dbReference type="SUPFAM" id="SSF52833">
    <property type="entry name" value="Thioredoxin-like"/>
    <property type="match status" value="1"/>
</dbReference>
<dbReference type="PROSITE" id="PS51352">
    <property type="entry name" value="THIOREDOXIN_2"/>
    <property type="match status" value="1"/>
</dbReference>
<dbReference type="PROSITE" id="PS01265">
    <property type="entry name" value="TPX"/>
    <property type="match status" value="1"/>
</dbReference>
<sequence>MTEITFKGGPIHLKGQQINEGDFAPDFTVLDNDLNQVTLADYAGKKKLISVVPSIDTGVCDQQTRKFNSDASKEEGIVLTISADLPFAQKRWCASAGLDNVITLSDHRDLSFGENYGVVMEELRLLARAVFVLDADNKVVYKEIVSEGTDFPDFDAALAAYKNI</sequence>
<proteinExistence type="inferred from homology"/>
<keyword id="KW-0049">Antioxidant</keyword>
<keyword id="KW-1015">Disulfide bond</keyword>
<keyword id="KW-0560">Oxidoreductase</keyword>
<keyword id="KW-0575">Peroxidase</keyword>
<keyword id="KW-0676">Redox-active center</keyword>
<accession>Q6G8L4</accession>